<evidence type="ECO:0000255" key="1">
    <source>
        <dbReference type="HAMAP-Rule" id="MF_00375"/>
    </source>
</evidence>
<keyword id="KW-0963">Cytoplasm</keyword>
<keyword id="KW-0413">Isomerase</keyword>
<keyword id="KW-0627">Porphyrin biosynthesis</keyword>
<keyword id="KW-0663">Pyridoxal phosphate</keyword>
<comment type="catalytic activity">
    <reaction evidence="1">
        <text>(S)-4-amino-5-oxopentanoate = 5-aminolevulinate</text>
        <dbReference type="Rhea" id="RHEA:14265"/>
        <dbReference type="ChEBI" id="CHEBI:57501"/>
        <dbReference type="ChEBI" id="CHEBI:356416"/>
        <dbReference type="EC" id="5.4.3.8"/>
    </reaction>
</comment>
<comment type="cofactor">
    <cofactor evidence="1">
        <name>pyridoxal 5'-phosphate</name>
        <dbReference type="ChEBI" id="CHEBI:597326"/>
    </cofactor>
</comment>
<comment type="pathway">
    <text evidence="1">Porphyrin-containing compound metabolism; protoporphyrin-IX biosynthesis; 5-aminolevulinate from L-glutamyl-tRNA(Glu): step 2/2.</text>
</comment>
<comment type="subunit">
    <text evidence="1">Homodimer.</text>
</comment>
<comment type="subcellular location">
    <subcellularLocation>
        <location evidence="1">Cytoplasm</location>
    </subcellularLocation>
</comment>
<comment type="similarity">
    <text evidence="1">Belongs to the class-III pyridoxal-phosphate-dependent aminotransferase family. HemL subfamily.</text>
</comment>
<accession>Q92BG1</accession>
<organism>
    <name type="scientific">Listeria innocua serovar 6a (strain ATCC BAA-680 / CLIP 11262)</name>
    <dbReference type="NCBI Taxonomy" id="272626"/>
    <lineage>
        <taxon>Bacteria</taxon>
        <taxon>Bacillati</taxon>
        <taxon>Bacillota</taxon>
        <taxon>Bacilli</taxon>
        <taxon>Bacillales</taxon>
        <taxon>Listeriaceae</taxon>
        <taxon>Listeria</taxon>
    </lineage>
</organism>
<sequence length="429" mass="46579">MQNYIKSEKAFKEAKKVLPGGVNSPVRAFNSVDASPVFMDHGKGAYITDVDGNEYIDYVLSWGPLILGHADPSVVNAITNSAMKGTSFGTPTEIETELAKLVIERVPSIEIVRMVSSGTEATMSAIRLARGYTKREKILKFEGSYHGHGDSLLIKAGSGVATLGLPDSPGVTKGLAADTITVPYNDVEGAKLAFEKFGEEIAAVIVEPVAGNMGVVPPIDGFLEGLRELTTEYGALLIFDEVMTGFRVDYYSAQGYYVVTPDITCLGKVIGGGLPVGAYGGKKEIMEQIAPAGSIYQAGTLSGNPLAMNAGFETVRQLTPQHYDVFRSLIKRMEEGLTEISNRHEVPLSINKAGSMFGFFFTDQKVTNFDTAKTSDLEFFRNYYREMLAQGIFLPPSQFEGVFISTMHTEKEIDATLEAFDVTCKMLRG</sequence>
<feature type="chain" id="PRO_0000120417" description="Glutamate-1-semialdehyde 2,1-aminomutase 1">
    <location>
        <begin position="1"/>
        <end position="429"/>
    </location>
</feature>
<feature type="modified residue" description="N6-(pyridoxal phosphate)lysine" evidence="1">
    <location>
        <position position="268"/>
    </location>
</feature>
<gene>
    <name evidence="1" type="primary">hemL1</name>
    <name type="ordered locus">lin1588</name>
</gene>
<protein>
    <recommendedName>
        <fullName evidence="1">Glutamate-1-semialdehyde 2,1-aminomutase 1</fullName>
        <shortName evidence="1">GSA 1</shortName>
        <ecNumber evidence="1">5.4.3.8</ecNumber>
    </recommendedName>
    <alternativeName>
        <fullName evidence="1">Glutamate-1-semialdehyde aminotransferase 1</fullName>
        <shortName evidence="1">GSA-AT 1</shortName>
    </alternativeName>
</protein>
<reference key="1">
    <citation type="journal article" date="2001" name="Science">
        <title>Comparative genomics of Listeria species.</title>
        <authorList>
            <person name="Glaser P."/>
            <person name="Frangeul L."/>
            <person name="Buchrieser C."/>
            <person name="Rusniok C."/>
            <person name="Amend A."/>
            <person name="Baquero F."/>
            <person name="Berche P."/>
            <person name="Bloecker H."/>
            <person name="Brandt P."/>
            <person name="Chakraborty T."/>
            <person name="Charbit A."/>
            <person name="Chetouani F."/>
            <person name="Couve E."/>
            <person name="de Daruvar A."/>
            <person name="Dehoux P."/>
            <person name="Domann E."/>
            <person name="Dominguez-Bernal G."/>
            <person name="Duchaud E."/>
            <person name="Durant L."/>
            <person name="Dussurget O."/>
            <person name="Entian K.-D."/>
            <person name="Fsihi H."/>
            <person name="Garcia-del Portillo F."/>
            <person name="Garrido P."/>
            <person name="Gautier L."/>
            <person name="Goebel W."/>
            <person name="Gomez-Lopez N."/>
            <person name="Hain T."/>
            <person name="Hauf J."/>
            <person name="Jackson D."/>
            <person name="Jones L.-M."/>
            <person name="Kaerst U."/>
            <person name="Kreft J."/>
            <person name="Kuhn M."/>
            <person name="Kunst F."/>
            <person name="Kurapkat G."/>
            <person name="Madueno E."/>
            <person name="Maitournam A."/>
            <person name="Mata Vicente J."/>
            <person name="Ng E."/>
            <person name="Nedjari H."/>
            <person name="Nordsiek G."/>
            <person name="Novella S."/>
            <person name="de Pablos B."/>
            <person name="Perez-Diaz J.-C."/>
            <person name="Purcell R."/>
            <person name="Remmel B."/>
            <person name="Rose M."/>
            <person name="Schlueter T."/>
            <person name="Simoes N."/>
            <person name="Tierrez A."/>
            <person name="Vazquez-Boland J.-A."/>
            <person name="Voss H."/>
            <person name="Wehland J."/>
            <person name="Cossart P."/>
        </authorList>
    </citation>
    <scope>NUCLEOTIDE SEQUENCE [LARGE SCALE GENOMIC DNA]</scope>
    <source>
        <strain>ATCC BAA-680 / CLIP 11262</strain>
    </source>
</reference>
<name>GSA1_LISIN</name>
<proteinExistence type="inferred from homology"/>
<dbReference type="EC" id="5.4.3.8" evidence="1"/>
<dbReference type="EMBL" id="AL596169">
    <property type="protein sequence ID" value="CAC96819.1"/>
    <property type="molecule type" value="Genomic_DNA"/>
</dbReference>
<dbReference type="PIR" id="AC1631">
    <property type="entry name" value="AC1631"/>
</dbReference>
<dbReference type="RefSeq" id="WP_010991602.1">
    <property type="nucleotide sequence ID" value="NC_003212.1"/>
</dbReference>
<dbReference type="SMR" id="Q92BG1"/>
<dbReference type="STRING" id="272626.gene:17565919"/>
<dbReference type="KEGG" id="lin:hemL"/>
<dbReference type="eggNOG" id="COG0001">
    <property type="taxonomic scope" value="Bacteria"/>
</dbReference>
<dbReference type="HOGENOM" id="CLU_016922_1_5_9"/>
<dbReference type="OrthoDB" id="9807885at2"/>
<dbReference type="UniPathway" id="UPA00251">
    <property type="reaction ID" value="UER00317"/>
</dbReference>
<dbReference type="Proteomes" id="UP000002513">
    <property type="component" value="Chromosome"/>
</dbReference>
<dbReference type="GO" id="GO:0005737">
    <property type="term" value="C:cytoplasm"/>
    <property type="evidence" value="ECO:0007669"/>
    <property type="project" value="UniProtKB-SubCell"/>
</dbReference>
<dbReference type="GO" id="GO:0042286">
    <property type="term" value="F:glutamate-1-semialdehyde 2,1-aminomutase activity"/>
    <property type="evidence" value="ECO:0007669"/>
    <property type="project" value="UniProtKB-UniRule"/>
</dbReference>
<dbReference type="GO" id="GO:0030170">
    <property type="term" value="F:pyridoxal phosphate binding"/>
    <property type="evidence" value="ECO:0007669"/>
    <property type="project" value="InterPro"/>
</dbReference>
<dbReference type="GO" id="GO:0008483">
    <property type="term" value="F:transaminase activity"/>
    <property type="evidence" value="ECO:0007669"/>
    <property type="project" value="InterPro"/>
</dbReference>
<dbReference type="GO" id="GO:0006782">
    <property type="term" value="P:protoporphyrinogen IX biosynthetic process"/>
    <property type="evidence" value="ECO:0007669"/>
    <property type="project" value="UniProtKB-UniRule"/>
</dbReference>
<dbReference type="CDD" id="cd00610">
    <property type="entry name" value="OAT_like"/>
    <property type="match status" value="1"/>
</dbReference>
<dbReference type="FunFam" id="3.40.640.10:FF:000021">
    <property type="entry name" value="Glutamate-1-semialdehyde 2,1-aminomutase"/>
    <property type="match status" value="1"/>
</dbReference>
<dbReference type="Gene3D" id="3.90.1150.10">
    <property type="entry name" value="Aspartate Aminotransferase, domain 1"/>
    <property type="match status" value="1"/>
</dbReference>
<dbReference type="Gene3D" id="3.40.640.10">
    <property type="entry name" value="Type I PLP-dependent aspartate aminotransferase-like (Major domain)"/>
    <property type="match status" value="1"/>
</dbReference>
<dbReference type="HAMAP" id="MF_00375">
    <property type="entry name" value="HemL_aminotrans_3"/>
    <property type="match status" value="1"/>
</dbReference>
<dbReference type="InterPro" id="IPR004639">
    <property type="entry name" value="4pyrrol_synth_GluAld_NH2Trfase"/>
</dbReference>
<dbReference type="InterPro" id="IPR005814">
    <property type="entry name" value="Aminotrans_3"/>
</dbReference>
<dbReference type="InterPro" id="IPR049704">
    <property type="entry name" value="Aminotrans_3_PPA_site"/>
</dbReference>
<dbReference type="InterPro" id="IPR015424">
    <property type="entry name" value="PyrdxlP-dep_Trfase"/>
</dbReference>
<dbReference type="InterPro" id="IPR015421">
    <property type="entry name" value="PyrdxlP-dep_Trfase_major"/>
</dbReference>
<dbReference type="InterPro" id="IPR015422">
    <property type="entry name" value="PyrdxlP-dep_Trfase_small"/>
</dbReference>
<dbReference type="NCBIfam" id="TIGR00713">
    <property type="entry name" value="hemL"/>
    <property type="match status" value="1"/>
</dbReference>
<dbReference type="NCBIfam" id="NF000818">
    <property type="entry name" value="PRK00062.1"/>
    <property type="match status" value="1"/>
</dbReference>
<dbReference type="PANTHER" id="PTHR43713">
    <property type="entry name" value="GLUTAMATE-1-SEMIALDEHYDE 2,1-AMINOMUTASE"/>
    <property type="match status" value="1"/>
</dbReference>
<dbReference type="PANTHER" id="PTHR43713:SF3">
    <property type="entry name" value="GLUTAMATE-1-SEMIALDEHYDE 2,1-AMINOMUTASE 1, CHLOROPLASTIC-RELATED"/>
    <property type="match status" value="1"/>
</dbReference>
<dbReference type="Pfam" id="PF00202">
    <property type="entry name" value="Aminotran_3"/>
    <property type="match status" value="1"/>
</dbReference>
<dbReference type="SUPFAM" id="SSF53383">
    <property type="entry name" value="PLP-dependent transferases"/>
    <property type="match status" value="1"/>
</dbReference>
<dbReference type="PROSITE" id="PS00600">
    <property type="entry name" value="AA_TRANSFER_CLASS_3"/>
    <property type="match status" value="1"/>
</dbReference>